<proteinExistence type="inferred from homology"/>
<gene>
    <name evidence="1" type="primary">cysI</name>
    <name type="ordered locus">ETA_27100</name>
</gene>
<evidence type="ECO:0000255" key="1">
    <source>
        <dbReference type="HAMAP-Rule" id="MF_01540"/>
    </source>
</evidence>
<name>CYSI_ERWT9</name>
<keyword id="KW-0004">4Fe-4S</keyword>
<keyword id="KW-0028">Amino-acid biosynthesis</keyword>
<keyword id="KW-0198">Cysteine biosynthesis</keyword>
<keyword id="KW-0349">Heme</keyword>
<keyword id="KW-0408">Iron</keyword>
<keyword id="KW-0411">Iron-sulfur</keyword>
<keyword id="KW-0479">Metal-binding</keyword>
<keyword id="KW-0521">NADP</keyword>
<keyword id="KW-0560">Oxidoreductase</keyword>
<keyword id="KW-1185">Reference proteome</keyword>
<organism>
    <name type="scientific">Erwinia tasmaniensis (strain DSM 17950 / CFBP 7177 / CIP 109463 / NCPPB 4357 / Et1/99)</name>
    <dbReference type="NCBI Taxonomy" id="465817"/>
    <lineage>
        <taxon>Bacteria</taxon>
        <taxon>Pseudomonadati</taxon>
        <taxon>Pseudomonadota</taxon>
        <taxon>Gammaproteobacteria</taxon>
        <taxon>Enterobacterales</taxon>
        <taxon>Erwiniaceae</taxon>
        <taxon>Erwinia</taxon>
    </lineage>
</organism>
<comment type="function">
    <text evidence="1">Component of the sulfite reductase complex that catalyzes the 6-electron reduction of sulfite to sulfide. This is one of several activities required for the biosynthesis of L-cysteine from sulfate.</text>
</comment>
<comment type="catalytic activity">
    <reaction evidence="1">
        <text>hydrogen sulfide + 3 NADP(+) + 3 H2O = sulfite + 3 NADPH + 4 H(+)</text>
        <dbReference type="Rhea" id="RHEA:13801"/>
        <dbReference type="ChEBI" id="CHEBI:15377"/>
        <dbReference type="ChEBI" id="CHEBI:15378"/>
        <dbReference type="ChEBI" id="CHEBI:17359"/>
        <dbReference type="ChEBI" id="CHEBI:29919"/>
        <dbReference type="ChEBI" id="CHEBI:57783"/>
        <dbReference type="ChEBI" id="CHEBI:58349"/>
        <dbReference type="EC" id="1.8.1.2"/>
    </reaction>
</comment>
<comment type="cofactor">
    <cofactor evidence="1">
        <name>siroheme</name>
        <dbReference type="ChEBI" id="CHEBI:60052"/>
    </cofactor>
    <text evidence="1">Binds 1 siroheme per subunit.</text>
</comment>
<comment type="cofactor">
    <cofactor evidence="1">
        <name>[4Fe-4S] cluster</name>
        <dbReference type="ChEBI" id="CHEBI:49883"/>
    </cofactor>
    <text evidence="1">Binds 1 [4Fe-4S] cluster per subunit.</text>
</comment>
<comment type="pathway">
    <text evidence="1">Sulfur metabolism; hydrogen sulfide biosynthesis; hydrogen sulfide from sulfite (NADPH route): step 1/1.</text>
</comment>
<comment type="subunit">
    <text evidence="1">Alpha(8)-beta(8). The alpha component is a flavoprotein, the beta component is a hemoprotein.</text>
</comment>
<comment type="similarity">
    <text evidence="1">Belongs to the nitrite and sulfite reductase 4Fe-4S domain family.</text>
</comment>
<protein>
    <recommendedName>
        <fullName evidence="1">Sulfite reductase [NADPH] hemoprotein beta-component</fullName>
        <shortName evidence="1">SiR-HP</shortName>
        <shortName evidence="1">SiRHP</shortName>
        <ecNumber evidence="1">1.8.1.2</ecNumber>
    </recommendedName>
</protein>
<reference key="1">
    <citation type="journal article" date="2008" name="Environ. Microbiol.">
        <title>The genome of Erwinia tasmaniensis strain Et1/99, a non-pathogenic bacterium in the genus Erwinia.</title>
        <authorList>
            <person name="Kube M."/>
            <person name="Migdoll A.M."/>
            <person name="Mueller I."/>
            <person name="Kuhl H."/>
            <person name="Beck A."/>
            <person name="Reinhardt R."/>
            <person name="Geider K."/>
        </authorList>
    </citation>
    <scope>NUCLEOTIDE SEQUENCE [LARGE SCALE GENOMIC DNA]</scope>
    <source>
        <strain>DSM 17950 / CFBP 7177 / CIP 109463 / NCPPB 4357 / Et1/99</strain>
    </source>
</reference>
<dbReference type="EC" id="1.8.1.2" evidence="1"/>
<dbReference type="EMBL" id="CU468135">
    <property type="protein sequence ID" value="CAO97756.1"/>
    <property type="molecule type" value="Genomic_DNA"/>
</dbReference>
<dbReference type="RefSeq" id="WP_012442413.1">
    <property type="nucleotide sequence ID" value="NC_010694.1"/>
</dbReference>
<dbReference type="SMR" id="B2VG06"/>
<dbReference type="STRING" id="465817.ETA_27100"/>
<dbReference type="KEGG" id="eta:ETA_27100"/>
<dbReference type="eggNOG" id="COG0155">
    <property type="taxonomic scope" value="Bacteria"/>
</dbReference>
<dbReference type="HOGENOM" id="CLU_001975_3_2_6"/>
<dbReference type="OrthoDB" id="3189055at2"/>
<dbReference type="UniPathway" id="UPA00140">
    <property type="reaction ID" value="UER00207"/>
</dbReference>
<dbReference type="Proteomes" id="UP000001726">
    <property type="component" value="Chromosome"/>
</dbReference>
<dbReference type="GO" id="GO:0009337">
    <property type="term" value="C:sulfite reductase complex (NADPH)"/>
    <property type="evidence" value="ECO:0007669"/>
    <property type="project" value="InterPro"/>
</dbReference>
<dbReference type="GO" id="GO:0051539">
    <property type="term" value="F:4 iron, 4 sulfur cluster binding"/>
    <property type="evidence" value="ECO:0007669"/>
    <property type="project" value="UniProtKB-KW"/>
</dbReference>
<dbReference type="GO" id="GO:0020037">
    <property type="term" value="F:heme binding"/>
    <property type="evidence" value="ECO:0007669"/>
    <property type="project" value="InterPro"/>
</dbReference>
<dbReference type="GO" id="GO:0046872">
    <property type="term" value="F:metal ion binding"/>
    <property type="evidence" value="ECO:0007669"/>
    <property type="project" value="UniProtKB-KW"/>
</dbReference>
<dbReference type="GO" id="GO:0050661">
    <property type="term" value="F:NADP binding"/>
    <property type="evidence" value="ECO:0007669"/>
    <property type="project" value="InterPro"/>
</dbReference>
<dbReference type="GO" id="GO:0050311">
    <property type="term" value="F:sulfite reductase (ferredoxin) activity"/>
    <property type="evidence" value="ECO:0007669"/>
    <property type="project" value="TreeGrafter"/>
</dbReference>
<dbReference type="GO" id="GO:0004783">
    <property type="term" value="F:sulfite reductase (NADPH) activity"/>
    <property type="evidence" value="ECO:0007669"/>
    <property type="project" value="UniProtKB-UniRule"/>
</dbReference>
<dbReference type="GO" id="GO:0019344">
    <property type="term" value="P:cysteine biosynthetic process"/>
    <property type="evidence" value="ECO:0007669"/>
    <property type="project" value="UniProtKB-KW"/>
</dbReference>
<dbReference type="GO" id="GO:0070814">
    <property type="term" value="P:hydrogen sulfide biosynthetic process"/>
    <property type="evidence" value="ECO:0007669"/>
    <property type="project" value="UniProtKB-UniRule"/>
</dbReference>
<dbReference type="GO" id="GO:0000103">
    <property type="term" value="P:sulfate assimilation"/>
    <property type="evidence" value="ECO:0007669"/>
    <property type="project" value="UniProtKB-UniRule"/>
</dbReference>
<dbReference type="FunFam" id="3.30.413.10:FF:000003">
    <property type="entry name" value="Sulfite reductase [NADPH] hemoprotein beta-component"/>
    <property type="match status" value="1"/>
</dbReference>
<dbReference type="FunFam" id="3.30.413.10:FF:000004">
    <property type="entry name" value="Sulfite reductase [NADPH] hemoprotein beta-component"/>
    <property type="match status" value="1"/>
</dbReference>
<dbReference type="Gene3D" id="3.30.413.10">
    <property type="entry name" value="Sulfite Reductase Hemoprotein, domain 1"/>
    <property type="match status" value="2"/>
</dbReference>
<dbReference type="HAMAP" id="MF_01540">
    <property type="entry name" value="CysI"/>
    <property type="match status" value="1"/>
</dbReference>
<dbReference type="InterPro" id="IPR011786">
    <property type="entry name" value="CysI"/>
</dbReference>
<dbReference type="InterPro" id="IPR005117">
    <property type="entry name" value="NiRdtase/SiRdtase_haem-b_fer"/>
</dbReference>
<dbReference type="InterPro" id="IPR036136">
    <property type="entry name" value="Nit/Sulf_reduc_fer-like_dom_sf"/>
</dbReference>
<dbReference type="InterPro" id="IPR006067">
    <property type="entry name" value="NO2/SO3_Rdtase_4Fe4S_dom"/>
</dbReference>
<dbReference type="InterPro" id="IPR045169">
    <property type="entry name" value="NO2/SO3_Rdtase_4Fe4S_prot"/>
</dbReference>
<dbReference type="InterPro" id="IPR045854">
    <property type="entry name" value="NO2/SO3_Rdtase_4Fe4S_sf"/>
</dbReference>
<dbReference type="InterPro" id="IPR006066">
    <property type="entry name" value="NO2/SO3_Rdtase_FeS/sirohaem_BS"/>
</dbReference>
<dbReference type="NCBIfam" id="TIGR02041">
    <property type="entry name" value="CysI"/>
    <property type="match status" value="1"/>
</dbReference>
<dbReference type="NCBIfam" id="NF010029">
    <property type="entry name" value="PRK13504.1"/>
    <property type="match status" value="1"/>
</dbReference>
<dbReference type="PANTHER" id="PTHR11493:SF47">
    <property type="entry name" value="SULFITE REDUCTASE [NADPH] SUBUNIT BETA"/>
    <property type="match status" value="1"/>
</dbReference>
<dbReference type="PANTHER" id="PTHR11493">
    <property type="entry name" value="SULFITE REDUCTASE [NADPH] SUBUNIT BETA-RELATED"/>
    <property type="match status" value="1"/>
</dbReference>
<dbReference type="Pfam" id="PF01077">
    <property type="entry name" value="NIR_SIR"/>
    <property type="match status" value="1"/>
</dbReference>
<dbReference type="Pfam" id="PF03460">
    <property type="entry name" value="NIR_SIR_ferr"/>
    <property type="match status" value="2"/>
</dbReference>
<dbReference type="PRINTS" id="PR00397">
    <property type="entry name" value="SIROHAEM"/>
</dbReference>
<dbReference type="SUPFAM" id="SSF56014">
    <property type="entry name" value="Nitrite and sulphite reductase 4Fe-4S domain-like"/>
    <property type="match status" value="2"/>
</dbReference>
<dbReference type="SUPFAM" id="SSF55124">
    <property type="entry name" value="Nitrite/Sulfite reductase N-terminal domain-like"/>
    <property type="match status" value="2"/>
</dbReference>
<dbReference type="PROSITE" id="PS00365">
    <property type="entry name" value="NIR_SIR"/>
    <property type="match status" value="1"/>
</dbReference>
<sequence>MSDEKYPGPLVVEGKLVDAERLKKQSNYLRGGIAEDLHDGLTGGFNGDNFLLIRFHGMYQQDDRDIRAERAEQKLDARHAMMLRCRLPGGIMTPRQWLAIDKFATDNTIYGSIRLTNRQTFQFHGILKGNVKPAHQMLHEVGLDALATANDVNRNVLCSSNPIESELHQEAYEWAKKLSEHLLPRTRAYAEIWLDQEKVATTDEEPILGETYLPRKFKTTVVVPPHNDVDLHANDMNFVAIAENGRLVGFNLLVGGGLSIDHGNKATYARTASEFGYLPLSKILDVAEAVVTTQRDWGNRTDRKNAKTKYTLERVGPEVFKAEVERRAGMTFEPIRPYEFTTRGDRFGWVKGIDHKWHLTLFIENGRLLDYPDRPLKTGLAEIAKIHQGDFRLTANQNLIVAGVPESEKENIERLALSHGLMENVSHQRENSMACVAFPTCPLAMAEAERFLPQFVTRVEAIMNAHGVGDEHIVLRVTGCPNGCGRALLAEIGLVGKAPGRYNLHLGGNRIGTRIPRMYQENINEEQILATLDELIGRWSQERNADEGFGDFTLRAGVVKPVLDPARDFWQ</sequence>
<accession>B2VG06</accession>
<feature type="chain" id="PRO_0000388484" description="Sulfite reductase [NADPH] hemoprotein beta-component">
    <location>
        <begin position="1"/>
        <end position="571"/>
    </location>
</feature>
<feature type="binding site" evidence="1">
    <location>
        <position position="435"/>
    </location>
    <ligand>
        <name>[4Fe-4S] cluster</name>
        <dbReference type="ChEBI" id="CHEBI:49883"/>
    </ligand>
</feature>
<feature type="binding site" evidence="1">
    <location>
        <position position="441"/>
    </location>
    <ligand>
        <name>[4Fe-4S] cluster</name>
        <dbReference type="ChEBI" id="CHEBI:49883"/>
    </ligand>
</feature>
<feature type="binding site" evidence="1">
    <location>
        <position position="480"/>
    </location>
    <ligand>
        <name>[4Fe-4S] cluster</name>
        <dbReference type="ChEBI" id="CHEBI:49883"/>
    </ligand>
</feature>
<feature type="binding site" evidence="1">
    <location>
        <position position="484"/>
    </location>
    <ligand>
        <name>[4Fe-4S] cluster</name>
        <dbReference type="ChEBI" id="CHEBI:49883"/>
    </ligand>
</feature>
<feature type="binding site" description="axial binding residue" evidence="1">
    <location>
        <position position="484"/>
    </location>
    <ligand>
        <name>siroheme</name>
        <dbReference type="ChEBI" id="CHEBI:60052"/>
    </ligand>
    <ligandPart>
        <name>Fe</name>
        <dbReference type="ChEBI" id="CHEBI:18248"/>
    </ligandPart>
</feature>